<dbReference type="EMBL" id="AF171229">
    <property type="protein sequence ID" value="AAD48491.1"/>
    <property type="molecule type" value="mRNA"/>
</dbReference>
<dbReference type="EMBL" id="BT007203">
    <property type="protein sequence ID" value="AAP35867.1"/>
    <property type="molecule type" value="mRNA"/>
</dbReference>
<dbReference type="EMBL" id="AL590764">
    <property type="status" value="NOT_ANNOTATED_CDS"/>
    <property type="molecule type" value="Genomic_DNA"/>
</dbReference>
<dbReference type="EMBL" id="BC020559">
    <property type="status" value="NOT_ANNOTATED_CDS"/>
    <property type="molecule type" value="mRNA"/>
</dbReference>
<dbReference type="CCDS" id="CCDS14405.1">
    <molecule id="Q9UMY4-2"/>
</dbReference>
<dbReference type="CCDS" id="CCDS59169.1">
    <molecule id="Q9UMY4-3"/>
</dbReference>
<dbReference type="RefSeq" id="NP_001243114.1">
    <molecule id="Q9UMY4-2"/>
    <property type="nucleotide sequence ID" value="NM_001256185.2"/>
</dbReference>
<dbReference type="RefSeq" id="NP_001243117.1">
    <molecule id="Q9UMY4-3"/>
    <property type="nucleotide sequence ID" value="NM_001256188.2"/>
</dbReference>
<dbReference type="RefSeq" id="NP_037478.2">
    <molecule id="Q9UMY4-2"/>
    <property type="nucleotide sequence ID" value="NM_013346.3"/>
</dbReference>
<dbReference type="PDB" id="2CSK">
    <property type="method" value="NMR"/>
    <property type="chains" value="A=27-159"/>
</dbReference>
<dbReference type="PDBsum" id="2CSK"/>
<dbReference type="SMR" id="Q9UMY4"/>
<dbReference type="BioGRID" id="118974">
    <property type="interactions" value="61"/>
</dbReference>
<dbReference type="FunCoup" id="Q9UMY4">
    <property type="interactions" value="1754"/>
</dbReference>
<dbReference type="IntAct" id="Q9UMY4">
    <property type="interactions" value="33"/>
</dbReference>
<dbReference type="MINT" id="Q9UMY4"/>
<dbReference type="STRING" id="9606.ENSP00000481314"/>
<dbReference type="TCDB" id="3.A.34.1.1">
    <property type="family name" value="the sorting nexins of the escrt complexes (sn-escrt)"/>
</dbReference>
<dbReference type="GlyGen" id="Q9UMY4">
    <property type="glycosylation" value="1 site, 1 O-linked glycan (1 site)"/>
</dbReference>
<dbReference type="iPTMnet" id="Q9UMY4"/>
<dbReference type="PhosphoSitePlus" id="Q9UMY4"/>
<dbReference type="BioMuta" id="SNX12"/>
<dbReference type="DMDM" id="50403807"/>
<dbReference type="jPOST" id="Q9UMY4"/>
<dbReference type="MassIVE" id="Q9UMY4"/>
<dbReference type="PaxDb" id="9606-ENSP00000481314"/>
<dbReference type="PeptideAtlas" id="Q9UMY4"/>
<dbReference type="ProteomicsDB" id="30165"/>
<dbReference type="ProteomicsDB" id="85230">
    <molecule id="Q9UMY4-1"/>
</dbReference>
<dbReference type="ProteomicsDB" id="85231">
    <molecule id="Q9UMY4-2"/>
</dbReference>
<dbReference type="Pumba" id="Q9UMY4"/>
<dbReference type="TopDownProteomics" id="Q9UMY4-2">
    <molecule id="Q9UMY4-2"/>
</dbReference>
<dbReference type="Antibodypedia" id="27466">
    <property type="antibodies" value="282 antibodies from 29 providers"/>
</dbReference>
<dbReference type="DNASU" id="29934"/>
<dbReference type="Ensembl" id="ENST00000276105.3">
    <molecule id="Q9UMY4-3"/>
    <property type="protein sequence ID" value="ENSP00000276105.3"/>
    <property type="gene ID" value="ENSG00000147164.12"/>
</dbReference>
<dbReference type="Ensembl" id="ENST00000374274.8">
    <molecule id="Q9UMY4-2"/>
    <property type="protein sequence ID" value="ENSP00000363392.3"/>
    <property type="gene ID" value="ENSG00000147164.12"/>
</dbReference>
<dbReference type="Ensembl" id="ENST00000622277.4">
    <molecule id="Q9UMY4-2"/>
    <property type="protein sequence ID" value="ENSP00000481314.1"/>
    <property type="gene ID" value="ENSG00000147164.12"/>
</dbReference>
<dbReference type="GeneID" id="29934"/>
<dbReference type="KEGG" id="hsa:29934"/>
<dbReference type="MANE-Select" id="ENST00000374274.8">
    <property type="protein sequence ID" value="ENSP00000363392.3"/>
    <property type="RefSeq nucleotide sequence ID" value="NM_013346.4"/>
    <property type="RefSeq protein sequence ID" value="NP_037478.2"/>
</dbReference>
<dbReference type="UCSC" id="uc004dyq.5">
    <molecule id="Q9UMY4-2"/>
    <property type="organism name" value="human"/>
</dbReference>
<dbReference type="AGR" id="HGNC:14976"/>
<dbReference type="CTD" id="29934"/>
<dbReference type="DisGeNET" id="29934"/>
<dbReference type="GeneCards" id="SNX12"/>
<dbReference type="HGNC" id="HGNC:14976">
    <property type="gene designation" value="SNX12"/>
</dbReference>
<dbReference type="HPA" id="ENSG00000147164">
    <property type="expression patterns" value="Low tissue specificity"/>
</dbReference>
<dbReference type="MIM" id="300883">
    <property type="type" value="gene"/>
</dbReference>
<dbReference type="neXtProt" id="NX_Q9UMY4"/>
<dbReference type="OpenTargets" id="ENSG00000147164"/>
<dbReference type="PharmGKB" id="PA37952"/>
<dbReference type="VEuPathDB" id="HostDB:ENSG00000147164"/>
<dbReference type="eggNOG" id="KOG2527">
    <property type="taxonomic scope" value="Eukaryota"/>
</dbReference>
<dbReference type="GeneTree" id="ENSGT00940000153609"/>
<dbReference type="HOGENOM" id="CLU_057172_2_2_1"/>
<dbReference type="InParanoid" id="Q9UMY4"/>
<dbReference type="OMA" id="NMYTDYE"/>
<dbReference type="OrthoDB" id="5227681at2759"/>
<dbReference type="PAN-GO" id="Q9UMY4">
    <property type="GO annotations" value="5 GO annotations based on evolutionary models"/>
</dbReference>
<dbReference type="PhylomeDB" id="Q9UMY4"/>
<dbReference type="TreeFam" id="TF314980"/>
<dbReference type="PathwayCommons" id="Q9UMY4"/>
<dbReference type="SignaLink" id="Q9UMY4"/>
<dbReference type="BioGRID-ORCS" id="29934">
    <property type="hits" value="10 hits in 776 CRISPR screens"/>
</dbReference>
<dbReference type="CD-CODE" id="FB4E32DD">
    <property type="entry name" value="Presynaptic clusters and postsynaptic densities"/>
</dbReference>
<dbReference type="ChiTaRS" id="SNX12">
    <property type="organism name" value="human"/>
</dbReference>
<dbReference type="EvolutionaryTrace" id="Q9UMY4"/>
<dbReference type="GenomeRNAi" id="29934"/>
<dbReference type="Pharos" id="Q9UMY4">
    <property type="development level" value="Tbio"/>
</dbReference>
<dbReference type="PRO" id="PR:Q9UMY4"/>
<dbReference type="Proteomes" id="UP000005640">
    <property type="component" value="Chromosome X"/>
</dbReference>
<dbReference type="RNAct" id="Q9UMY4">
    <property type="molecule type" value="protein"/>
</dbReference>
<dbReference type="Bgee" id="ENSG00000147164">
    <property type="expression patterns" value="Expressed in ileal mucosa and 185 other cell types or tissues"/>
</dbReference>
<dbReference type="ExpressionAtlas" id="Q9UMY4">
    <property type="expression patterns" value="baseline and differential"/>
</dbReference>
<dbReference type="GO" id="GO:0005769">
    <property type="term" value="C:early endosome"/>
    <property type="evidence" value="ECO:0000314"/>
    <property type="project" value="UniProtKB"/>
</dbReference>
<dbReference type="GO" id="GO:0031901">
    <property type="term" value="C:early endosome membrane"/>
    <property type="evidence" value="ECO:0000318"/>
    <property type="project" value="GO_Central"/>
</dbReference>
<dbReference type="GO" id="GO:0030904">
    <property type="term" value="C:retromer complex"/>
    <property type="evidence" value="ECO:0000318"/>
    <property type="project" value="GO_Central"/>
</dbReference>
<dbReference type="GO" id="GO:0019899">
    <property type="term" value="F:enzyme binding"/>
    <property type="evidence" value="ECO:0000353"/>
    <property type="project" value="UniProtKB"/>
</dbReference>
<dbReference type="GO" id="GO:0035091">
    <property type="term" value="F:phosphatidylinositol binding"/>
    <property type="evidence" value="ECO:0000314"/>
    <property type="project" value="UniProtKB"/>
</dbReference>
<dbReference type="GO" id="GO:0032266">
    <property type="term" value="F:phosphatidylinositol-3-phosphate binding"/>
    <property type="evidence" value="ECO:0000318"/>
    <property type="project" value="GO_Central"/>
</dbReference>
<dbReference type="GO" id="GO:0032456">
    <property type="term" value="P:endocytic recycling"/>
    <property type="evidence" value="ECO:0000318"/>
    <property type="project" value="GO_Central"/>
</dbReference>
<dbReference type="GO" id="GO:0034499">
    <property type="term" value="P:late endosome to Golgi transport"/>
    <property type="evidence" value="ECO:0000318"/>
    <property type="project" value="GO_Central"/>
</dbReference>
<dbReference type="GO" id="GO:2000642">
    <property type="term" value="P:negative regulation of early endosome to late endosome transport"/>
    <property type="evidence" value="ECO:0000314"/>
    <property type="project" value="UniProtKB"/>
</dbReference>
<dbReference type="GO" id="GO:0010629">
    <property type="term" value="P:negative regulation of gene expression"/>
    <property type="evidence" value="ECO:0000315"/>
    <property type="project" value="UniProtKB"/>
</dbReference>
<dbReference type="GO" id="GO:0042177">
    <property type="term" value="P:negative regulation of protein catabolic process"/>
    <property type="evidence" value="ECO:0000314"/>
    <property type="project" value="UniProtKB"/>
</dbReference>
<dbReference type="GO" id="GO:0010955">
    <property type="term" value="P:negative regulation of protein processing"/>
    <property type="evidence" value="ECO:0000314"/>
    <property type="project" value="UniProtKB"/>
</dbReference>
<dbReference type="GO" id="GO:0051224">
    <property type="term" value="P:negative regulation of protein transport"/>
    <property type="evidence" value="ECO:0000314"/>
    <property type="project" value="UniProtKB"/>
</dbReference>
<dbReference type="GO" id="GO:0015031">
    <property type="term" value="P:protein transport"/>
    <property type="evidence" value="ECO:0007669"/>
    <property type="project" value="UniProtKB-KW"/>
</dbReference>
<dbReference type="GO" id="GO:0030100">
    <property type="term" value="P:regulation of endocytosis"/>
    <property type="evidence" value="ECO:0000315"/>
    <property type="project" value="UniProtKB"/>
</dbReference>
<dbReference type="CDD" id="cd07294">
    <property type="entry name" value="PX_SNX12"/>
    <property type="match status" value="1"/>
</dbReference>
<dbReference type="FunFam" id="3.30.1520.10:FF:000002">
    <property type="entry name" value="Sorting nexin 12"/>
    <property type="match status" value="1"/>
</dbReference>
<dbReference type="Gene3D" id="3.30.1520.10">
    <property type="entry name" value="Phox-like domain"/>
    <property type="match status" value="1"/>
</dbReference>
<dbReference type="InterPro" id="IPR001683">
    <property type="entry name" value="PX_dom"/>
</dbReference>
<dbReference type="InterPro" id="IPR036871">
    <property type="entry name" value="PX_dom_sf"/>
</dbReference>
<dbReference type="InterPro" id="IPR051074">
    <property type="entry name" value="Sorting_Nexin"/>
</dbReference>
<dbReference type="PANTHER" id="PTHR45963">
    <property type="entry name" value="RE52028P"/>
    <property type="match status" value="1"/>
</dbReference>
<dbReference type="PANTHER" id="PTHR45963:SF3">
    <property type="entry name" value="SORTING NEXIN-12"/>
    <property type="match status" value="1"/>
</dbReference>
<dbReference type="Pfam" id="PF00787">
    <property type="entry name" value="PX"/>
    <property type="match status" value="1"/>
</dbReference>
<dbReference type="SMART" id="SM00312">
    <property type="entry name" value="PX"/>
    <property type="match status" value="1"/>
</dbReference>
<dbReference type="SUPFAM" id="SSF64268">
    <property type="entry name" value="PX domain"/>
    <property type="match status" value="1"/>
</dbReference>
<dbReference type="PROSITE" id="PS50195">
    <property type="entry name" value="PX"/>
    <property type="match status" value="1"/>
</dbReference>
<evidence type="ECO:0000250" key="1"/>
<evidence type="ECO:0000255" key="2">
    <source>
        <dbReference type="PROSITE-ProRule" id="PRU00147"/>
    </source>
</evidence>
<evidence type="ECO:0000256" key="3">
    <source>
        <dbReference type="SAM" id="MobiDB-lite"/>
    </source>
</evidence>
<evidence type="ECO:0000305" key="4"/>
<evidence type="ECO:0007744" key="5">
    <source>
    </source>
</evidence>
<evidence type="ECO:0007744" key="6">
    <source>
    </source>
</evidence>
<evidence type="ECO:0007744" key="7">
    <source>
    </source>
</evidence>
<evidence type="ECO:0007744" key="8">
    <source>
    </source>
</evidence>
<evidence type="ECO:0007829" key="9">
    <source>
        <dbReference type="PDB" id="2CSK"/>
    </source>
</evidence>
<feature type="initiator methionine" description="Removed" evidence="6 7">
    <location>
        <position position="1"/>
    </location>
</feature>
<feature type="chain" id="PRO_0000213858" description="Sorting nexin-12">
    <location>
        <begin position="2"/>
        <end position="162"/>
    </location>
</feature>
<feature type="domain" description="PX" evidence="2">
    <location>
        <begin position="28"/>
        <end position="152"/>
    </location>
</feature>
<feature type="region of interest" description="Disordered" evidence="3">
    <location>
        <begin position="1"/>
        <end position="20"/>
    </location>
</feature>
<feature type="binding site" evidence="1">
    <location>
        <position position="71"/>
    </location>
    <ligand>
        <name>a 1,2-diacyl-sn-glycero-3-phospho-(1D-myo-inositol-3-phosphate)</name>
        <dbReference type="ChEBI" id="CHEBI:58088"/>
    </ligand>
</feature>
<feature type="binding site" evidence="1">
    <location>
        <position position="73"/>
    </location>
    <ligand>
        <name>a 1,2-diacyl-sn-glycero-3-phospho-(1D-myo-inositol-3-phosphate)</name>
        <dbReference type="ChEBI" id="CHEBI:58088"/>
    </ligand>
</feature>
<feature type="binding site" evidence="1">
    <location>
        <position position="96"/>
    </location>
    <ligand>
        <name>a 1,2-diacyl-sn-glycero-3-phospho-(1D-myo-inositol-3-phosphate)</name>
        <dbReference type="ChEBI" id="CHEBI:58088"/>
    </ligand>
</feature>
<feature type="binding site" evidence="1">
    <location>
        <position position="119"/>
    </location>
    <ligand>
        <name>a 1,2-diacyl-sn-glycero-3-phospho-(1D-myo-inositol-3-phosphate)</name>
        <dbReference type="ChEBI" id="CHEBI:58088"/>
    </ligand>
</feature>
<feature type="modified residue" description="N-acetylserine" evidence="6 7">
    <location>
        <position position="2"/>
    </location>
</feature>
<feature type="modified residue" description="Phosphotyrosine" evidence="5">
    <location>
        <position position="23"/>
    </location>
</feature>
<feature type="modified residue" description="Phosphoserine" evidence="8">
    <location>
        <position position="73"/>
    </location>
</feature>
<feature type="splice variant" id="VSP_060252" description="In isoform 3.">
    <location>
        <begin position="52"/>
        <end position="55"/>
    </location>
</feature>
<feature type="splice variant" id="VSP_060253" description="In isoform 1.">
    <original>VRQ</original>
    <variation>SLAVSCPGWSAVA</variation>
    <location>
        <begin position="160"/>
        <end position="162"/>
    </location>
</feature>
<feature type="sequence conflict" description="In Ref. 1; AAD48491." evidence="4" ref="1">
    <original>Q</original>
    <variation>K</variation>
    <location>
        <position position="101"/>
    </location>
</feature>
<feature type="strand" evidence="9">
    <location>
        <begin position="31"/>
        <end position="45"/>
    </location>
</feature>
<feature type="strand" evidence="9">
    <location>
        <begin position="47"/>
        <end position="55"/>
    </location>
</feature>
<feature type="strand" evidence="9">
    <location>
        <begin position="59"/>
        <end position="62"/>
    </location>
</feature>
<feature type="strand" evidence="9">
    <location>
        <begin position="64"/>
        <end position="70"/>
    </location>
</feature>
<feature type="helix" evidence="9">
    <location>
        <begin position="72"/>
        <end position="82"/>
    </location>
</feature>
<feature type="strand" evidence="9">
    <location>
        <begin position="83"/>
        <end position="87"/>
    </location>
</feature>
<feature type="helix" evidence="9">
    <location>
        <begin position="113"/>
        <end position="132"/>
    </location>
</feature>
<feature type="helix" evidence="9">
    <location>
        <begin position="134"/>
        <end position="138"/>
    </location>
</feature>
<feature type="helix" evidence="9">
    <location>
        <begin position="140"/>
        <end position="145"/>
    </location>
</feature>
<protein>
    <recommendedName>
        <fullName>Sorting nexin-12</fullName>
    </recommendedName>
</protein>
<gene>
    <name type="primary">SNX12</name>
</gene>
<comment type="function">
    <text evidence="1">May be involved in several stages of intracellular trafficking.</text>
</comment>
<comment type="interaction">
    <interactant intactId="EBI-1752602">
        <id>Q9UMY4</id>
    </interactant>
    <interactant intactId="EBI-751728">
        <id>P01019</id>
        <label>AGT</label>
    </interactant>
    <organismsDiffer>false</organismsDiffer>
    <experiments>3</experiments>
</comment>
<comment type="interaction">
    <interactant intactId="EBI-1752602">
        <id>Q9UMY4</id>
    </interactant>
    <interactant intactId="EBI-714543">
        <id>Q15041</id>
        <label>ARL6IP1</label>
    </interactant>
    <organismsDiffer>false</organismsDiffer>
    <experiments>3</experiments>
</comment>
<comment type="interaction">
    <interactant intactId="EBI-1752602">
        <id>Q9UMY4</id>
    </interactant>
    <interactant intactId="EBI-357407">
        <id>P78371</id>
        <label>CCT2</label>
    </interactant>
    <organismsDiffer>false</organismsDiffer>
    <experiments>3</experiments>
</comment>
<comment type="interaction">
    <interactant intactId="EBI-1752602">
        <id>Q9UMY4</id>
    </interactant>
    <interactant intactId="EBI-356507">
        <id>P50990</id>
        <label>CCT8</label>
    </interactant>
    <organismsDiffer>false</organismsDiffer>
    <experiments>3</experiments>
</comment>
<comment type="interaction">
    <interactant intactId="EBI-1752602">
        <id>Q9UMY4</id>
    </interactant>
    <interactant intactId="EBI-466029">
        <id>P42858</id>
        <label>HTT</label>
    </interactant>
    <organismsDiffer>false</organismsDiffer>
    <experiments>3</experiments>
</comment>
<comment type="interaction">
    <interactant intactId="EBI-1752602">
        <id>Q9UMY4</id>
    </interactant>
    <interactant intactId="EBI-10087153">
        <id>P03952</id>
        <label>KLKB1</label>
    </interactant>
    <organismsDiffer>false</organismsDiffer>
    <experiments>3</experiments>
</comment>
<comment type="interaction">
    <interactant intactId="EBI-1752602">
        <id>Q9UMY4</id>
    </interactant>
    <interactant intactId="EBI-715909">
        <id>P06858</id>
        <label>LPL</label>
    </interactant>
    <organismsDiffer>false</organismsDiffer>
    <experiments>3</experiments>
</comment>
<comment type="interaction">
    <interactant intactId="EBI-1752602">
        <id>Q9UMY4</id>
    </interactant>
    <interactant intactId="EBI-389883">
        <id>P16333</id>
        <label>NCK1</label>
    </interactant>
    <organismsDiffer>false</organismsDiffer>
    <experiments>3</experiments>
</comment>
<comment type="interaction">
    <interactant intactId="EBI-1752602">
        <id>Q9UMY4</id>
    </interactant>
    <interactant intactId="EBI-721769">
        <id>Q9BY11</id>
        <label>PACSIN1</label>
    </interactant>
    <organismsDiffer>false</organismsDiffer>
    <experiments>3</experiments>
</comment>
<comment type="interaction">
    <interactant intactId="EBI-22419305">
        <id>Q9UMY4-1</id>
    </interactant>
    <interactant intactId="EBI-714543">
        <id>Q15041</id>
        <label>ARL6IP1</label>
    </interactant>
    <organismsDiffer>false</organismsDiffer>
    <experiments>3</experiments>
</comment>
<comment type="interaction">
    <interactant intactId="EBI-22419305">
        <id>Q9UMY4-1</id>
    </interactant>
    <interactant intactId="EBI-3918971">
        <id>Q9Y680</id>
        <label>FKBP7</label>
    </interactant>
    <organismsDiffer>false</organismsDiffer>
    <experiments>3</experiments>
</comment>
<comment type="interaction">
    <interactant intactId="EBI-22419305">
        <id>Q9UMY4-1</id>
    </interactant>
    <interactant intactId="EBI-14065960">
        <id>Q96HR9-2</id>
        <label>REEP6</label>
    </interactant>
    <organismsDiffer>false</organismsDiffer>
    <experiments>3</experiments>
</comment>
<comment type="interaction">
    <interactant intactId="EBI-22419305">
        <id>Q9UMY4-1</id>
    </interactant>
    <interactant intactId="EBI-1052363">
        <id>Q9NS64</id>
        <label>RPRM</label>
    </interactant>
    <organismsDiffer>false</organismsDiffer>
    <experiments>3</experiments>
</comment>
<comment type="subcellular location">
    <subcellularLocation>
        <location evidence="4">Membrane</location>
        <topology evidence="4">Peripheral membrane protein</topology>
        <orientation evidence="4">Cytoplasmic side</orientation>
    </subcellularLocation>
</comment>
<comment type="alternative products">
    <event type="alternative splicing"/>
    <isoform>
        <id>Q9UMY4-2</id>
        <name>2</name>
        <sequence type="displayed"/>
    </isoform>
    <isoform>
        <id>Q9UMY4-1</id>
        <name>1</name>
        <sequence type="described" ref="VSP_060253"/>
    </isoform>
    <isoform>
        <id>Q9UMY4-3</id>
        <name>3</name>
        <sequence type="described" ref="VSP_060252"/>
    </isoform>
</comment>
<comment type="domain">
    <text evidence="1">The PX domain mediates interaction with membranes enriched in phosphatidylinositol 3-phosphate.</text>
</comment>
<comment type="miscellaneous">
    <molecule>Isoform 1</molecule>
    <text evidence="4">May be produced at very low levels due to a premature stop codon in the mRNA, leading to nonsense-mediated mRNA decay.</text>
</comment>
<comment type="similarity">
    <text evidence="4">Belongs to the sorting nexin family.</text>
</comment>
<sequence>MSDTAVADTRRLNSKPQDLTDAYGPPSNFLEIDIFNPQTVGVGRARFTTYEVRMRTNLPIFKLKESCVRRRYSDFEWLKNELERDSKIVVPPLPGKALKRQLPFRGDEGIFEESFIEERRQGLEQFINKIAGHPLAQNERCLHMFLQEEAIDRNYVPGKVRQ</sequence>
<reference key="1">
    <citation type="journal article" date="2001" name="Biochem. J.">
        <title>A large family of endosome-localized proteins related to sorting nexin 1.</title>
        <authorList>
            <person name="Teasdale R.D."/>
            <person name="Loci D."/>
            <person name="Houghton F."/>
            <person name="Karlsson L."/>
            <person name="Gleeson P.A."/>
        </authorList>
    </citation>
    <scope>NUCLEOTIDE SEQUENCE [MRNA] (ISOFORM 2)</scope>
</reference>
<reference key="2">
    <citation type="submission" date="2003-05" db="EMBL/GenBank/DDBJ databases">
        <title>Cloning of human full-length CDSs in BD Creator(TM) system donor vector.</title>
        <authorList>
            <person name="Kalnine N."/>
            <person name="Chen X."/>
            <person name="Rolfs A."/>
            <person name="Halleck A."/>
            <person name="Hines L."/>
            <person name="Eisenstein S."/>
            <person name="Koundinya M."/>
            <person name="Raphael J."/>
            <person name="Moreira D."/>
            <person name="Kelley T."/>
            <person name="LaBaer J."/>
            <person name="Lin Y."/>
            <person name="Phelan M."/>
            <person name="Farmer A."/>
        </authorList>
    </citation>
    <scope>NUCLEOTIDE SEQUENCE [LARGE SCALE MRNA] (ISOFORM 1)</scope>
</reference>
<reference key="3">
    <citation type="journal article" date="2004" name="Nature">
        <title>The DNA sequence and comparative analysis of human chromosome 10.</title>
        <authorList>
            <person name="Deloukas P."/>
            <person name="Earthrowl M.E."/>
            <person name="Grafham D.V."/>
            <person name="Rubenfield M."/>
            <person name="French L."/>
            <person name="Steward C.A."/>
            <person name="Sims S.K."/>
            <person name="Jones M.C."/>
            <person name="Searle S."/>
            <person name="Scott C."/>
            <person name="Howe K."/>
            <person name="Hunt S.E."/>
            <person name="Andrews T.D."/>
            <person name="Gilbert J.G.R."/>
            <person name="Swarbreck D."/>
            <person name="Ashurst J.L."/>
            <person name="Taylor A."/>
            <person name="Battles J."/>
            <person name="Bird C.P."/>
            <person name="Ainscough R."/>
            <person name="Almeida J.P."/>
            <person name="Ashwell R.I.S."/>
            <person name="Ambrose K.D."/>
            <person name="Babbage A.K."/>
            <person name="Bagguley C.L."/>
            <person name="Bailey J."/>
            <person name="Banerjee R."/>
            <person name="Bates K."/>
            <person name="Beasley H."/>
            <person name="Bray-Allen S."/>
            <person name="Brown A.J."/>
            <person name="Brown J.Y."/>
            <person name="Burford D.C."/>
            <person name="Burrill W."/>
            <person name="Burton J."/>
            <person name="Cahill P."/>
            <person name="Camire D."/>
            <person name="Carter N.P."/>
            <person name="Chapman J.C."/>
            <person name="Clark S.Y."/>
            <person name="Clarke G."/>
            <person name="Clee C.M."/>
            <person name="Clegg S."/>
            <person name="Corby N."/>
            <person name="Coulson A."/>
            <person name="Dhami P."/>
            <person name="Dutta I."/>
            <person name="Dunn M."/>
            <person name="Faulkner L."/>
            <person name="Frankish A."/>
            <person name="Frankland J.A."/>
            <person name="Garner P."/>
            <person name="Garnett J."/>
            <person name="Gribble S."/>
            <person name="Griffiths C."/>
            <person name="Grocock R."/>
            <person name="Gustafson E."/>
            <person name="Hammond S."/>
            <person name="Harley J.L."/>
            <person name="Hart E."/>
            <person name="Heath P.D."/>
            <person name="Ho T.P."/>
            <person name="Hopkins B."/>
            <person name="Horne J."/>
            <person name="Howden P.J."/>
            <person name="Huckle E."/>
            <person name="Hynds C."/>
            <person name="Johnson C."/>
            <person name="Johnson D."/>
            <person name="Kana A."/>
            <person name="Kay M."/>
            <person name="Kimberley A.M."/>
            <person name="Kershaw J.K."/>
            <person name="Kokkinaki M."/>
            <person name="Laird G.K."/>
            <person name="Lawlor S."/>
            <person name="Lee H.M."/>
            <person name="Leongamornlert D.A."/>
            <person name="Laird G."/>
            <person name="Lloyd C."/>
            <person name="Lloyd D.M."/>
            <person name="Loveland J."/>
            <person name="Lovell J."/>
            <person name="McLaren S."/>
            <person name="McLay K.E."/>
            <person name="McMurray A."/>
            <person name="Mashreghi-Mohammadi M."/>
            <person name="Matthews L."/>
            <person name="Milne S."/>
            <person name="Nickerson T."/>
            <person name="Nguyen M."/>
            <person name="Overton-Larty E."/>
            <person name="Palmer S.A."/>
            <person name="Pearce A.V."/>
            <person name="Peck A.I."/>
            <person name="Pelan S."/>
            <person name="Phillimore B."/>
            <person name="Porter K."/>
            <person name="Rice C.M."/>
            <person name="Rogosin A."/>
            <person name="Ross M.T."/>
            <person name="Sarafidou T."/>
            <person name="Sehra H.K."/>
            <person name="Shownkeen R."/>
            <person name="Skuce C.D."/>
            <person name="Smith M."/>
            <person name="Standring L."/>
            <person name="Sycamore N."/>
            <person name="Tester J."/>
            <person name="Thorpe A."/>
            <person name="Torcasso W."/>
            <person name="Tracey A."/>
            <person name="Tromans A."/>
            <person name="Tsolas J."/>
            <person name="Wall M."/>
            <person name="Walsh J."/>
            <person name="Wang H."/>
            <person name="Weinstock K."/>
            <person name="West A.P."/>
            <person name="Willey D.L."/>
            <person name="Whitehead S.L."/>
            <person name="Wilming L."/>
            <person name="Wray P.W."/>
            <person name="Young L."/>
            <person name="Chen Y."/>
            <person name="Lovering R.C."/>
            <person name="Moschonas N.K."/>
            <person name="Siebert R."/>
            <person name="Fechtel K."/>
            <person name="Bentley D."/>
            <person name="Durbin R.M."/>
            <person name="Hubbard T."/>
            <person name="Doucette-Stamm L."/>
            <person name="Beck S."/>
            <person name="Smith D.R."/>
            <person name="Rogers J."/>
        </authorList>
    </citation>
    <scope>NUCLEOTIDE SEQUENCE [LARGE SCALE GENOMIC DNA]</scope>
</reference>
<reference key="4">
    <citation type="journal article" date="2004" name="Genome Res.">
        <title>The status, quality, and expansion of the NIH full-length cDNA project: the Mammalian Gene Collection (MGC).</title>
        <authorList>
            <consortium name="The MGC Project Team"/>
        </authorList>
    </citation>
    <scope>NUCLEOTIDE SEQUENCE [LARGE SCALE MRNA] (ISOFORM 1)</scope>
    <source>
        <tissue>Placenta</tissue>
    </source>
</reference>
<reference key="5">
    <citation type="journal article" date="2005" name="Nat. Biotechnol.">
        <title>Immunoaffinity profiling of tyrosine phosphorylation in cancer cells.</title>
        <authorList>
            <person name="Rush J."/>
            <person name="Moritz A."/>
            <person name="Lee K.A."/>
            <person name="Guo A."/>
            <person name="Goss V.L."/>
            <person name="Spek E.J."/>
            <person name="Zhang H."/>
            <person name="Zha X.-M."/>
            <person name="Polakiewicz R.D."/>
            <person name="Comb M.J."/>
        </authorList>
    </citation>
    <scope>PHOSPHORYLATION [LARGE SCALE ANALYSIS] AT TYR-23</scope>
    <scope>IDENTIFICATION BY MASS SPECTROMETRY [LARGE SCALE ANALYSIS]</scope>
</reference>
<reference key="6">
    <citation type="journal article" date="2006" name="Cell">
        <title>Global, in vivo, and site-specific phosphorylation dynamics in signaling networks.</title>
        <authorList>
            <person name="Olsen J.V."/>
            <person name="Blagoev B."/>
            <person name="Gnad F."/>
            <person name="Macek B."/>
            <person name="Kumar C."/>
            <person name="Mortensen P."/>
            <person name="Mann M."/>
        </authorList>
    </citation>
    <scope>IDENTIFICATION BY MASS SPECTROMETRY [LARGE SCALE ANALYSIS]</scope>
    <source>
        <tissue>Cervix carcinoma</tissue>
    </source>
</reference>
<reference key="7">
    <citation type="journal article" date="2008" name="Proc. Natl. Acad. Sci. U.S.A.">
        <title>A quantitative atlas of mitotic phosphorylation.</title>
        <authorList>
            <person name="Dephoure N."/>
            <person name="Zhou C."/>
            <person name="Villen J."/>
            <person name="Beausoleil S.A."/>
            <person name="Bakalarski C.E."/>
            <person name="Elledge S.J."/>
            <person name="Gygi S.P."/>
        </authorList>
    </citation>
    <scope>IDENTIFICATION BY MASS SPECTROMETRY [LARGE SCALE ANALYSIS]</scope>
    <source>
        <tissue>Cervix carcinoma</tissue>
    </source>
</reference>
<reference key="8">
    <citation type="journal article" date="2009" name="Anal. Chem.">
        <title>Lys-N and trypsin cover complementary parts of the phosphoproteome in a refined SCX-based approach.</title>
        <authorList>
            <person name="Gauci S."/>
            <person name="Helbig A.O."/>
            <person name="Slijper M."/>
            <person name="Krijgsveld J."/>
            <person name="Heck A.J."/>
            <person name="Mohammed S."/>
        </authorList>
    </citation>
    <scope>ACETYLATION [LARGE SCALE ANALYSIS] AT SER-2</scope>
    <scope>CLEAVAGE OF INITIATOR METHIONINE [LARGE SCALE ANALYSIS]</scope>
    <scope>IDENTIFICATION BY MASS SPECTROMETRY [LARGE SCALE ANALYSIS]</scope>
</reference>
<reference key="9">
    <citation type="journal article" date="2011" name="BMC Syst. Biol.">
        <title>Initial characterization of the human central proteome.</title>
        <authorList>
            <person name="Burkard T.R."/>
            <person name="Planyavsky M."/>
            <person name="Kaupe I."/>
            <person name="Breitwieser F.P."/>
            <person name="Buerckstuemmer T."/>
            <person name="Bennett K.L."/>
            <person name="Superti-Furga G."/>
            <person name="Colinge J."/>
        </authorList>
    </citation>
    <scope>IDENTIFICATION BY MASS SPECTROMETRY [LARGE SCALE ANALYSIS]</scope>
</reference>
<reference key="10">
    <citation type="journal article" date="2012" name="Proc. Natl. Acad. Sci. U.S.A.">
        <title>N-terminal acetylome analyses and functional insights of the N-terminal acetyltransferase NatB.</title>
        <authorList>
            <person name="Van Damme P."/>
            <person name="Lasa M."/>
            <person name="Polevoda B."/>
            <person name="Gazquez C."/>
            <person name="Elosegui-Artola A."/>
            <person name="Kim D.S."/>
            <person name="De Juan-Pardo E."/>
            <person name="Demeyer K."/>
            <person name="Hole K."/>
            <person name="Larrea E."/>
            <person name="Timmerman E."/>
            <person name="Prieto J."/>
            <person name="Arnesen T."/>
            <person name="Sherman F."/>
            <person name="Gevaert K."/>
            <person name="Aldabe R."/>
        </authorList>
    </citation>
    <scope>ACETYLATION [LARGE SCALE ANALYSIS] AT SER-2</scope>
    <scope>CLEAVAGE OF INITIATOR METHIONINE [LARGE SCALE ANALYSIS]</scope>
    <scope>IDENTIFICATION BY MASS SPECTROMETRY [LARGE SCALE ANALYSIS]</scope>
</reference>
<reference key="11">
    <citation type="journal article" date="2013" name="J. Proteome Res.">
        <title>Toward a comprehensive characterization of a human cancer cell phosphoproteome.</title>
        <authorList>
            <person name="Zhou H."/>
            <person name="Di Palma S."/>
            <person name="Preisinger C."/>
            <person name="Peng M."/>
            <person name="Polat A.N."/>
            <person name="Heck A.J."/>
            <person name="Mohammed S."/>
        </authorList>
    </citation>
    <scope>PHOSPHORYLATION [LARGE SCALE ANALYSIS] AT SER-73</scope>
    <scope>IDENTIFICATION BY MASS SPECTROMETRY [LARGE SCALE ANALYSIS]</scope>
    <source>
        <tissue>Cervix carcinoma</tissue>
    </source>
</reference>
<reference key="12">
    <citation type="journal article" date="2015" name="Proteomics">
        <title>N-terminome analysis of the human mitochondrial proteome.</title>
        <authorList>
            <person name="Vaca Jacome A.S."/>
            <person name="Rabilloud T."/>
            <person name="Schaeffer-Reiss C."/>
            <person name="Rompais M."/>
            <person name="Ayoub D."/>
            <person name="Lane L."/>
            <person name="Bairoch A."/>
            <person name="Van Dorsselaer A."/>
            <person name="Carapito C."/>
        </authorList>
    </citation>
    <scope>IDENTIFICATION BY MASS SPECTROMETRY [LARGE SCALE ANALYSIS]</scope>
</reference>
<reference key="13">
    <citation type="submission" date="2005-11" db="PDB data bank">
        <title>Solution structure of PX domain from human SNX12.</title>
        <authorList>
            <consortium name="RIKEN structural genomics initiative (RSGI)"/>
        </authorList>
    </citation>
    <scope>STRUCTURE BY NMR OF 27-160</scope>
</reference>
<accession>Q9UMY4</accession>
<accession>F8W8K5</accession>
<accession>Q8WUG9</accession>
<organism>
    <name type="scientific">Homo sapiens</name>
    <name type="common">Human</name>
    <dbReference type="NCBI Taxonomy" id="9606"/>
    <lineage>
        <taxon>Eukaryota</taxon>
        <taxon>Metazoa</taxon>
        <taxon>Chordata</taxon>
        <taxon>Craniata</taxon>
        <taxon>Vertebrata</taxon>
        <taxon>Euteleostomi</taxon>
        <taxon>Mammalia</taxon>
        <taxon>Eutheria</taxon>
        <taxon>Euarchontoglires</taxon>
        <taxon>Primates</taxon>
        <taxon>Haplorrhini</taxon>
        <taxon>Catarrhini</taxon>
        <taxon>Hominidae</taxon>
        <taxon>Homo</taxon>
    </lineage>
</organism>
<keyword id="KW-0002">3D-structure</keyword>
<keyword id="KW-0007">Acetylation</keyword>
<keyword id="KW-0025">Alternative splicing</keyword>
<keyword id="KW-0446">Lipid-binding</keyword>
<keyword id="KW-0472">Membrane</keyword>
<keyword id="KW-0597">Phosphoprotein</keyword>
<keyword id="KW-0653">Protein transport</keyword>
<keyword id="KW-1267">Proteomics identification</keyword>
<keyword id="KW-1185">Reference proteome</keyword>
<keyword id="KW-0813">Transport</keyword>
<name>SNX12_HUMAN</name>
<proteinExistence type="evidence at protein level"/>